<evidence type="ECO:0000255" key="1">
    <source>
        <dbReference type="HAMAP-Rule" id="MF_01454"/>
    </source>
</evidence>
<evidence type="ECO:0000255" key="2">
    <source>
        <dbReference type="PROSITE-ProRule" id="PRU01231"/>
    </source>
</evidence>
<organism>
    <name type="scientific">Borreliella burgdorferi (strain ZS7)</name>
    <name type="common">Borrelia burgdorferi</name>
    <dbReference type="NCBI Taxonomy" id="445985"/>
    <lineage>
        <taxon>Bacteria</taxon>
        <taxon>Pseudomonadati</taxon>
        <taxon>Spirochaetota</taxon>
        <taxon>Spirochaetia</taxon>
        <taxon>Spirochaetales</taxon>
        <taxon>Borreliaceae</taxon>
        <taxon>Borreliella</taxon>
    </lineage>
</organism>
<gene>
    <name evidence="1" type="primary">obg</name>
    <name type="ordered locus">BbuZS7_0810</name>
</gene>
<feature type="chain" id="PRO_0000385755" description="GTPase Obg">
    <location>
        <begin position="1"/>
        <end position="328"/>
    </location>
</feature>
<feature type="domain" description="Obg" evidence="2">
    <location>
        <begin position="2"/>
        <end position="160"/>
    </location>
</feature>
<feature type="domain" description="OBG-type G" evidence="1">
    <location>
        <begin position="161"/>
        <end position="326"/>
    </location>
</feature>
<feature type="binding site" evidence="1">
    <location>
        <begin position="167"/>
        <end position="174"/>
    </location>
    <ligand>
        <name>GTP</name>
        <dbReference type="ChEBI" id="CHEBI:37565"/>
    </ligand>
</feature>
<feature type="binding site" evidence="1">
    <location>
        <position position="174"/>
    </location>
    <ligand>
        <name>Mg(2+)</name>
        <dbReference type="ChEBI" id="CHEBI:18420"/>
    </ligand>
</feature>
<feature type="binding site" evidence="1">
    <location>
        <begin position="192"/>
        <end position="196"/>
    </location>
    <ligand>
        <name>GTP</name>
        <dbReference type="ChEBI" id="CHEBI:37565"/>
    </ligand>
</feature>
<feature type="binding site" evidence="1">
    <location>
        <position position="194"/>
    </location>
    <ligand>
        <name>Mg(2+)</name>
        <dbReference type="ChEBI" id="CHEBI:18420"/>
    </ligand>
</feature>
<feature type="binding site" evidence="1">
    <location>
        <begin position="213"/>
        <end position="216"/>
    </location>
    <ligand>
        <name>GTP</name>
        <dbReference type="ChEBI" id="CHEBI:37565"/>
    </ligand>
</feature>
<feature type="binding site" evidence="1">
    <location>
        <begin position="280"/>
        <end position="283"/>
    </location>
    <ligand>
        <name>GTP</name>
        <dbReference type="ChEBI" id="CHEBI:37565"/>
    </ligand>
</feature>
<feature type="binding site" evidence="1">
    <location>
        <begin position="307"/>
        <end position="309"/>
    </location>
    <ligand>
        <name>GTP</name>
        <dbReference type="ChEBI" id="CHEBI:37565"/>
    </ligand>
</feature>
<accession>B7J0M7</accession>
<proteinExistence type="inferred from homology"/>
<sequence>MYNFKDSVNITVVSGNGGSGCVSFLREKFNAKGGPDGGNGGSGGSVIFKVRENLSTLSFYKNGHVLCAENGKPGMGFKRSGANGKDLTLFVPPNTEVYNENDGTLLYRLKNLNDEFVVLKGGRGGLGNWNFKTSVRRVPRFAQPGESGNSLSVRLELFLVADIGLVGLPNAGKSSLLNRITSAKSRVANYPFTTKIPHLGMLRRSYDDLIIADIPGIIKGASFGVGLGTKFLKHIAKTKILALVIDISEANFLESYNILLNELKSYSHKLFNKKKIIIANKLDLDGSEKNFDCLIKALGKEKVVGISIYENRGIDELIKEFFILAKTF</sequence>
<name>OBG_BORBZ</name>
<dbReference type="EC" id="3.6.5.-" evidence="1"/>
<dbReference type="EMBL" id="CP001205">
    <property type="protein sequence ID" value="ACK75114.1"/>
    <property type="molecule type" value="Genomic_DNA"/>
</dbReference>
<dbReference type="SMR" id="B7J0M7"/>
<dbReference type="KEGG" id="bbz:BbuZS7_0810"/>
<dbReference type="HOGENOM" id="CLU_011747_2_0_12"/>
<dbReference type="Proteomes" id="UP000006901">
    <property type="component" value="Chromosome"/>
</dbReference>
<dbReference type="GO" id="GO:0005737">
    <property type="term" value="C:cytoplasm"/>
    <property type="evidence" value="ECO:0007669"/>
    <property type="project" value="UniProtKB-SubCell"/>
</dbReference>
<dbReference type="GO" id="GO:0005525">
    <property type="term" value="F:GTP binding"/>
    <property type="evidence" value="ECO:0007669"/>
    <property type="project" value="UniProtKB-UniRule"/>
</dbReference>
<dbReference type="GO" id="GO:0003924">
    <property type="term" value="F:GTPase activity"/>
    <property type="evidence" value="ECO:0007669"/>
    <property type="project" value="UniProtKB-UniRule"/>
</dbReference>
<dbReference type="GO" id="GO:0000287">
    <property type="term" value="F:magnesium ion binding"/>
    <property type="evidence" value="ECO:0007669"/>
    <property type="project" value="InterPro"/>
</dbReference>
<dbReference type="GO" id="GO:0042254">
    <property type="term" value="P:ribosome biogenesis"/>
    <property type="evidence" value="ECO:0007669"/>
    <property type="project" value="UniProtKB-UniRule"/>
</dbReference>
<dbReference type="CDD" id="cd01898">
    <property type="entry name" value="Obg"/>
    <property type="match status" value="1"/>
</dbReference>
<dbReference type="FunFam" id="2.70.210.12:FF:000001">
    <property type="entry name" value="GTPase Obg"/>
    <property type="match status" value="1"/>
</dbReference>
<dbReference type="Gene3D" id="2.70.210.12">
    <property type="entry name" value="GTP1/OBG domain"/>
    <property type="match status" value="1"/>
</dbReference>
<dbReference type="Gene3D" id="3.40.50.300">
    <property type="entry name" value="P-loop containing nucleotide triphosphate hydrolases"/>
    <property type="match status" value="1"/>
</dbReference>
<dbReference type="HAMAP" id="MF_01454">
    <property type="entry name" value="GTPase_Obg"/>
    <property type="match status" value="1"/>
</dbReference>
<dbReference type="InterPro" id="IPR031167">
    <property type="entry name" value="G_OBG"/>
</dbReference>
<dbReference type="InterPro" id="IPR006073">
    <property type="entry name" value="GTP-bd"/>
</dbReference>
<dbReference type="InterPro" id="IPR014100">
    <property type="entry name" value="GTP-bd_Obg/CgtA"/>
</dbReference>
<dbReference type="InterPro" id="IPR006074">
    <property type="entry name" value="GTP1-OBG_CS"/>
</dbReference>
<dbReference type="InterPro" id="IPR006169">
    <property type="entry name" value="GTP1_OBG_dom"/>
</dbReference>
<dbReference type="InterPro" id="IPR036726">
    <property type="entry name" value="GTP1_OBG_dom_sf"/>
</dbReference>
<dbReference type="InterPro" id="IPR045086">
    <property type="entry name" value="OBG_GTPase"/>
</dbReference>
<dbReference type="InterPro" id="IPR027417">
    <property type="entry name" value="P-loop_NTPase"/>
</dbReference>
<dbReference type="InterPro" id="IPR005225">
    <property type="entry name" value="Small_GTP-bd"/>
</dbReference>
<dbReference type="NCBIfam" id="TIGR02729">
    <property type="entry name" value="Obg_CgtA"/>
    <property type="match status" value="1"/>
</dbReference>
<dbReference type="NCBIfam" id="NF008956">
    <property type="entry name" value="PRK12299.1"/>
    <property type="match status" value="1"/>
</dbReference>
<dbReference type="NCBIfam" id="TIGR00231">
    <property type="entry name" value="small_GTP"/>
    <property type="match status" value="1"/>
</dbReference>
<dbReference type="PANTHER" id="PTHR11702">
    <property type="entry name" value="DEVELOPMENTALLY REGULATED GTP-BINDING PROTEIN-RELATED"/>
    <property type="match status" value="1"/>
</dbReference>
<dbReference type="PANTHER" id="PTHR11702:SF31">
    <property type="entry name" value="MITOCHONDRIAL RIBOSOME-ASSOCIATED GTPASE 2"/>
    <property type="match status" value="1"/>
</dbReference>
<dbReference type="Pfam" id="PF01018">
    <property type="entry name" value="GTP1_OBG"/>
    <property type="match status" value="1"/>
</dbReference>
<dbReference type="Pfam" id="PF01926">
    <property type="entry name" value="MMR_HSR1"/>
    <property type="match status" value="1"/>
</dbReference>
<dbReference type="PIRSF" id="PIRSF002401">
    <property type="entry name" value="GTP_bd_Obg/CgtA"/>
    <property type="match status" value="1"/>
</dbReference>
<dbReference type="PRINTS" id="PR00326">
    <property type="entry name" value="GTP1OBG"/>
</dbReference>
<dbReference type="SUPFAM" id="SSF82051">
    <property type="entry name" value="Obg GTP-binding protein N-terminal domain"/>
    <property type="match status" value="1"/>
</dbReference>
<dbReference type="SUPFAM" id="SSF52540">
    <property type="entry name" value="P-loop containing nucleoside triphosphate hydrolases"/>
    <property type="match status" value="1"/>
</dbReference>
<dbReference type="PROSITE" id="PS51710">
    <property type="entry name" value="G_OBG"/>
    <property type="match status" value="1"/>
</dbReference>
<dbReference type="PROSITE" id="PS00905">
    <property type="entry name" value="GTP1_OBG"/>
    <property type="match status" value="1"/>
</dbReference>
<dbReference type="PROSITE" id="PS51883">
    <property type="entry name" value="OBG"/>
    <property type="match status" value="1"/>
</dbReference>
<reference key="1">
    <citation type="journal article" date="2011" name="J. Bacteriol.">
        <title>Whole-genome sequences of thirteen isolates of Borrelia burgdorferi.</title>
        <authorList>
            <person name="Schutzer S.E."/>
            <person name="Fraser-Liggett C.M."/>
            <person name="Casjens S.R."/>
            <person name="Qiu W.G."/>
            <person name="Dunn J.J."/>
            <person name="Mongodin E.F."/>
            <person name="Luft B.J."/>
        </authorList>
    </citation>
    <scope>NUCLEOTIDE SEQUENCE [LARGE SCALE GENOMIC DNA]</scope>
    <source>
        <strain>ZS7</strain>
    </source>
</reference>
<comment type="function">
    <text evidence="1">An essential GTPase which binds GTP, GDP and possibly (p)ppGpp with moderate affinity, with high nucleotide exchange rates and a fairly low GTP hydrolysis rate. Plays a role in control of the cell cycle, stress response, ribosome biogenesis and in those bacteria that undergo differentiation, in morphogenesis control.</text>
</comment>
<comment type="cofactor">
    <cofactor evidence="1">
        <name>Mg(2+)</name>
        <dbReference type="ChEBI" id="CHEBI:18420"/>
    </cofactor>
</comment>
<comment type="subunit">
    <text evidence="1">Monomer.</text>
</comment>
<comment type="subcellular location">
    <subcellularLocation>
        <location evidence="1">Cytoplasm</location>
    </subcellularLocation>
</comment>
<comment type="similarity">
    <text evidence="1">Belongs to the TRAFAC class OBG-HflX-like GTPase superfamily. OBG GTPase family.</text>
</comment>
<protein>
    <recommendedName>
        <fullName evidence="1">GTPase Obg</fullName>
        <ecNumber evidence="1">3.6.5.-</ecNumber>
    </recommendedName>
    <alternativeName>
        <fullName evidence="1">GTP-binding protein Obg</fullName>
    </alternativeName>
</protein>
<keyword id="KW-0963">Cytoplasm</keyword>
<keyword id="KW-0342">GTP-binding</keyword>
<keyword id="KW-0378">Hydrolase</keyword>
<keyword id="KW-0460">Magnesium</keyword>
<keyword id="KW-0479">Metal-binding</keyword>
<keyword id="KW-0547">Nucleotide-binding</keyword>